<sequence>MEELQGYLKIDRSRERDFLYPLLFQEYIYALAHDHGLNKSILYEPMENLGYDKKYSLIIVKRLITRMYQQKHLIIFTNDSNPNFFFGHNKNLDSQMISEGVAVIVELPFSLRLVSSPESKEIDKSMTTLRSIHSIFPFLEDKLLHLNHVLDILIPYPIHLELLVQTLRSWIQDAPFLHLLRFFLYKYHNWNSLITQKTKMILFFSKENQRFFLFLYNFHVYESESIFVFLRKQSYHLRSTSSRAFLDRTHFYRKIEHFFVDFRNDFHTILWLFKDPFIQYFRFQGKSILSSKGTPLLMKKWKYYLVNLWECHFYFWSQPDRIHINQLSNHFIDFLGYLSSVRPTPSAVRSQMLEKSFIIDIVIKKFDTIVPIIPLIGSLAKAKFCNFSGHPISKPAWADSSDSDIIDRFGRICRNLSHYYSGSSKKKSLYRIKYILRLSCARTLARKHKSTVRSFLKRLGSEFLEEFLMEEEQVLSFILPRISYFSKRLYKERIWYFDIIRINDLTNLS</sequence>
<evidence type="ECO:0000255" key="1">
    <source>
        <dbReference type="HAMAP-Rule" id="MF_01390"/>
    </source>
</evidence>
<name>MATK_CLEFL</name>
<comment type="function">
    <text evidence="1">Usually encoded in the trnK tRNA gene intron. Probably assists in splicing its own and other chloroplast group II introns.</text>
</comment>
<comment type="subcellular location">
    <subcellularLocation>
        <location>Plastid</location>
        <location>Chloroplast</location>
    </subcellularLocation>
</comment>
<comment type="similarity">
    <text evidence="1">Belongs to the intron maturase 2 family. MatK subfamily.</text>
</comment>
<reference key="1">
    <citation type="submission" date="2003-05" db="EMBL/GenBank/DDBJ databases">
        <title>Phylogenetic relationship of subtribe Clematidinae (Ranunculaceae) based on chloroplast and nuclear DNA sequences.</title>
        <authorList>
            <person name="Miikeda O."/>
            <person name="Kita K."/>
            <person name="Handa T."/>
            <person name="Yukawa T."/>
        </authorList>
    </citation>
    <scope>NUCLEOTIDE SEQUENCE [GENOMIC DNA]</scope>
</reference>
<keyword id="KW-0150">Chloroplast</keyword>
<keyword id="KW-0507">mRNA processing</keyword>
<keyword id="KW-0934">Plastid</keyword>
<keyword id="KW-0694">RNA-binding</keyword>
<keyword id="KW-0819">tRNA processing</keyword>
<dbReference type="EMBL" id="AB110505">
    <property type="protein sequence ID" value="BAC77178.1"/>
    <property type="molecule type" value="Genomic_DNA"/>
</dbReference>
<dbReference type="GO" id="GO:0009507">
    <property type="term" value="C:chloroplast"/>
    <property type="evidence" value="ECO:0007669"/>
    <property type="project" value="UniProtKB-SubCell"/>
</dbReference>
<dbReference type="GO" id="GO:0003723">
    <property type="term" value="F:RNA binding"/>
    <property type="evidence" value="ECO:0007669"/>
    <property type="project" value="UniProtKB-KW"/>
</dbReference>
<dbReference type="GO" id="GO:0006397">
    <property type="term" value="P:mRNA processing"/>
    <property type="evidence" value="ECO:0007669"/>
    <property type="project" value="UniProtKB-KW"/>
</dbReference>
<dbReference type="GO" id="GO:0008380">
    <property type="term" value="P:RNA splicing"/>
    <property type="evidence" value="ECO:0007669"/>
    <property type="project" value="UniProtKB-UniRule"/>
</dbReference>
<dbReference type="GO" id="GO:0008033">
    <property type="term" value="P:tRNA processing"/>
    <property type="evidence" value="ECO:0007669"/>
    <property type="project" value="UniProtKB-KW"/>
</dbReference>
<dbReference type="HAMAP" id="MF_01390">
    <property type="entry name" value="MatK"/>
    <property type="match status" value="1"/>
</dbReference>
<dbReference type="InterPro" id="IPR024937">
    <property type="entry name" value="Domain_X"/>
</dbReference>
<dbReference type="InterPro" id="IPR002866">
    <property type="entry name" value="Maturase_MatK"/>
</dbReference>
<dbReference type="InterPro" id="IPR024942">
    <property type="entry name" value="Maturase_MatK_N"/>
</dbReference>
<dbReference type="PANTHER" id="PTHR34811">
    <property type="entry name" value="MATURASE K"/>
    <property type="match status" value="1"/>
</dbReference>
<dbReference type="PANTHER" id="PTHR34811:SF1">
    <property type="entry name" value="MATURASE K"/>
    <property type="match status" value="1"/>
</dbReference>
<dbReference type="Pfam" id="PF01348">
    <property type="entry name" value="Intron_maturas2"/>
    <property type="match status" value="1"/>
</dbReference>
<dbReference type="Pfam" id="PF01824">
    <property type="entry name" value="MatK_N"/>
    <property type="match status" value="1"/>
</dbReference>
<feature type="chain" id="PRO_0000143334" description="Maturase K">
    <location>
        <begin position="1"/>
        <end position="509"/>
    </location>
</feature>
<gene>
    <name evidence="1" type="primary">matK</name>
</gene>
<organism>
    <name type="scientific">Clematis florida</name>
    <name type="common">Asian virgin's bower</name>
    <dbReference type="NCBI Taxonomy" id="231648"/>
    <lineage>
        <taxon>Eukaryota</taxon>
        <taxon>Viridiplantae</taxon>
        <taxon>Streptophyta</taxon>
        <taxon>Embryophyta</taxon>
        <taxon>Tracheophyta</taxon>
        <taxon>Spermatophyta</taxon>
        <taxon>Magnoliopsida</taxon>
        <taxon>Ranunculales</taxon>
        <taxon>Ranunculaceae</taxon>
        <taxon>Ranunculoideae</taxon>
        <taxon>Anemoneae</taxon>
        <taxon>Clematis</taxon>
    </lineage>
</organism>
<protein>
    <recommendedName>
        <fullName evidence="1">Maturase K</fullName>
    </recommendedName>
    <alternativeName>
        <fullName evidence="1">Intron maturase</fullName>
    </alternativeName>
</protein>
<proteinExistence type="inferred from homology"/>
<geneLocation type="chloroplast"/>
<accession>Q7YMX0</accession>